<accession>B6I851</accession>
<comment type="catalytic activity">
    <reaction evidence="1">
        <text>1-(5-phospho-beta-D-ribosyl)-5-[(5-phospho-beta-D-ribosylamino)methylideneamino]imidazole-4-carboxamide = 5-[(5-phospho-1-deoxy-D-ribulos-1-ylimino)methylamino]-1-(5-phospho-beta-D-ribosyl)imidazole-4-carboxamide</text>
        <dbReference type="Rhea" id="RHEA:15469"/>
        <dbReference type="ChEBI" id="CHEBI:58435"/>
        <dbReference type="ChEBI" id="CHEBI:58525"/>
        <dbReference type="EC" id="5.3.1.16"/>
    </reaction>
</comment>
<comment type="pathway">
    <text evidence="1">Amino-acid biosynthesis; L-histidine biosynthesis; L-histidine from 5-phospho-alpha-D-ribose 1-diphosphate: step 4/9.</text>
</comment>
<comment type="subcellular location">
    <subcellularLocation>
        <location evidence="1">Cytoplasm</location>
    </subcellularLocation>
</comment>
<comment type="similarity">
    <text evidence="1">Belongs to the HisA/HisF family.</text>
</comment>
<feature type="chain" id="PRO_1000135114" description="1-(5-phosphoribosyl)-5-[(5-phosphoribosylamino)methylideneamino] imidazole-4-carboxamide isomerase">
    <location>
        <begin position="1"/>
        <end position="245"/>
    </location>
</feature>
<feature type="active site" description="Proton acceptor" evidence="1">
    <location>
        <position position="7"/>
    </location>
</feature>
<feature type="active site" description="Proton donor" evidence="1">
    <location>
        <position position="129"/>
    </location>
</feature>
<proteinExistence type="inferred from homology"/>
<organism>
    <name type="scientific">Escherichia coli (strain SE11)</name>
    <dbReference type="NCBI Taxonomy" id="409438"/>
    <lineage>
        <taxon>Bacteria</taxon>
        <taxon>Pseudomonadati</taxon>
        <taxon>Pseudomonadota</taxon>
        <taxon>Gammaproteobacteria</taxon>
        <taxon>Enterobacterales</taxon>
        <taxon>Enterobacteriaceae</taxon>
        <taxon>Escherichia</taxon>
    </lineage>
</organism>
<evidence type="ECO:0000255" key="1">
    <source>
        <dbReference type="HAMAP-Rule" id="MF_01014"/>
    </source>
</evidence>
<keyword id="KW-0028">Amino-acid biosynthesis</keyword>
<keyword id="KW-0963">Cytoplasm</keyword>
<keyword id="KW-0368">Histidine biosynthesis</keyword>
<keyword id="KW-0413">Isomerase</keyword>
<protein>
    <recommendedName>
        <fullName evidence="1">1-(5-phosphoribosyl)-5-[(5-phosphoribosylamino)methylideneamino] imidazole-4-carboxamide isomerase</fullName>
        <ecNumber evidence="1">5.3.1.16</ecNumber>
    </recommendedName>
    <alternativeName>
        <fullName evidence="1">Phosphoribosylformimino-5-aminoimidazole carboxamide ribotide isomerase</fullName>
    </alternativeName>
</protein>
<sequence length="245" mass="26033">MIIPALDLIDGTVVRLHQGDYGKQRDYGNDPLPRLQDYAAQGAEVLHLVDLTGAKDPAKRQIPLIKTLVAGVNVPVQVGGGVRSEEDVAALLEAGVARVVVGSTAVKSQDMVKGWFERFGADALVLALDVRIDEQGNKQVAVSGWQENSGVSLEQLVETYLPVGLKHVLCTDISRDGTLAGSNVSLYEEVCARYPQVAFQSSGGIGDIDDVAALRGTGVRGVIVGRALLEGKFTVKEAIACWQNA</sequence>
<dbReference type="EC" id="5.3.1.16" evidence="1"/>
<dbReference type="EMBL" id="AP009240">
    <property type="protein sequence ID" value="BAG77822.1"/>
    <property type="molecule type" value="Genomic_DNA"/>
</dbReference>
<dbReference type="RefSeq" id="WP_000586462.1">
    <property type="nucleotide sequence ID" value="NC_011415.1"/>
</dbReference>
<dbReference type="SMR" id="B6I851"/>
<dbReference type="KEGG" id="ecy:ECSE_2298"/>
<dbReference type="HOGENOM" id="CLU_048577_1_2_6"/>
<dbReference type="UniPathway" id="UPA00031">
    <property type="reaction ID" value="UER00009"/>
</dbReference>
<dbReference type="Proteomes" id="UP000008199">
    <property type="component" value="Chromosome"/>
</dbReference>
<dbReference type="GO" id="GO:0005737">
    <property type="term" value="C:cytoplasm"/>
    <property type="evidence" value="ECO:0007669"/>
    <property type="project" value="UniProtKB-SubCell"/>
</dbReference>
<dbReference type="GO" id="GO:0003949">
    <property type="term" value="F:1-(5-phosphoribosyl)-5-[(5-phosphoribosylamino)methylideneamino]imidazole-4-carboxamide isomerase activity"/>
    <property type="evidence" value="ECO:0007669"/>
    <property type="project" value="UniProtKB-UniRule"/>
</dbReference>
<dbReference type="GO" id="GO:0000105">
    <property type="term" value="P:L-histidine biosynthetic process"/>
    <property type="evidence" value="ECO:0007669"/>
    <property type="project" value="UniProtKB-UniRule"/>
</dbReference>
<dbReference type="GO" id="GO:0000162">
    <property type="term" value="P:L-tryptophan biosynthetic process"/>
    <property type="evidence" value="ECO:0007669"/>
    <property type="project" value="TreeGrafter"/>
</dbReference>
<dbReference type="CDD" id="cd04732">
    <property type="entry name" value="HisA"/>
    <property type="match status" value="1"/>
</dbReference>
<dbReference type="FunFam" id="3.20.20.70:FF:000009">
    <property type="entry name" value="1-(5-phosphoribosyl)-5-[(5-phosphoribosylamino)methylideneamino] imidazole-4-carboxamide isomerase"/>
    <property type="match status" value="1"/>
</dbReference>
<dbReference type="Gene3D" id="3.20.20.70">
    <property type="entry name" value="Aldolase class I"/>
    <property type="match status" value="1"/>
</dbReference>
<dbReference type="HAMAP" id="MF_01014">
    <property type="entry name" value="HisA"/>
    <property type="match status" value="1"/>
</dbReference>
<dbReference type="InterPro" id="IPR013785">
    <property type="entry name" value="Aldolase_TIM"/>
</dbReference>
<dbReference type="InterPro" id="IPR006062">
    <property type="entry name" value="His_biosynth"/>
</dbReference>
<dbReference type="InterPro" id="IPR006063">
    <property type="entry name" value="HisA_bact_arch"/>
</dbReference>
<dbReference type="InterPro" id="IPR044524">
    <property type="entry name" value="Isoase_HisA-like"/>
</dbReference>
<dbReference type="InterPro" id="IPR023016">
    <property type="entry name" value="Isoase_HisA-like_bact"/>
</dbReference>
<dbReference type="InterPro" id="IPR011060">
    <property type="entry name" value="RibuloseP-bd_barrel"/>
</dbReference>
<dbReference type="NCBIfam" id="TIGR00007">
    <property type="entry name" value="1-(5-phosphoribosyl)-5-[(5-phosphoribosylamino)methylideneamino]imidazole-4-carboxamide isomerase"/>
    <property type="match status" value="1"/>
</dbReference>
<dbReference type="PANTHER" id="PTHR43090">
    <property type="entry name" value="1-(5-PHOSPHORIBOSYL)-5-[(5-PHOSPHORIBOSYLAMINO)METHYLIDENEAMINO] IMIDAZOLE-4-CARBOXAMIDE ISOMERASE"/>
    <property type="match status" value="1"/>
</dbReference>
<dbReference type="PANTHER" id="PTHR43090:SF2">
    <property type="entry name" value="1-(5-PHOSPHORIBOSYL)-5-[(5-PHOSPHORIBOSYLAMINO)METHYLIDENEAMINO] IMIDAZOLE-4-CARBOXAMIDE ISOMERASE"/>
    <property type="match status" value="1"/>
</dbReference>
<dbReference type="Pfam" id="PF00977">
    <property type="entry name" value="His_biosynth"/>
    <property type="match status" value="1"/>
</dbReference>
<dbReference type="SUPFAM" id="SSF51366">
    <property type="entry name" value="Ribulose-phoshate binding barrel"/>
    <property type="match status" value="1"/>
</dbReference>
<gene>
    <name evidence="1" type="primary">hisA</name>
    <name type="ordered locus">ECSE_2298</name>
</gene>
<name>HIS4_ECOSE</name>
<reference key="1">
    <citation type="journal article" date="2008" name="DNA Res.">
        <title>Complete genome sequence and comparative analysis of the wild-type commensal Escherichia coli strain SE11 isolated from a healthy adult.</title>
        <authorList>
            <person name="Oshima K."/>
            <person name="Toh H."/>
            <person name="Ogura Y."/>
            <person name="Sasamoto H."/>
            <person name="Morita H."/>
            <person name="Park S.-H."/>
            <person name="Ooka T."/>
            <person name="Iyoda S."/>
            <person name="Taylor T.D."/>
            <person name="Hayashi T."/>
            <person name="Itoh K."/>
            <person name="Hattori M."/>
        </authorList>
    </citation>
    <scope>NUCLEOTIDE SEQUENCE [LARGE SCALE GENOMIC DNA]</scope>
    <source>
        <strain>SE11</strain>
    </source>
</reference>